<name>HMUV_ENTCL</name>
<feature type="chain" id="PRO_0000269593" description="Hemin import ATP-binding protein HmuV">
    <location>
        <begin position="1"/>
        <end position="261"/>
    </location>
</feature>
<feature type="domain" description="ABC transporter" evidence="1">
    <location>
        <begin position="5"/>
        <end position="241"/>
    </location>
</feature>
<feature type="binding site" evidence="1">
    <location>
        <begin position="37"/>
        <end position="44"/>
    </location>
    <ligand>
        <name>ATP</name>
        <dbReference type="ChEBI" id="CHEBI:30616"/>
    </ligand>
</feature>
<accession>Q84EY8</accession>
<keyword id="KW-0067">ATP-binding</keyword>
<keyword id="KW-0997">Cell inner membrane</keyword>
<keyword id="KW-1003">Cell membrane</keyword>
<keyword id="KW-0472">Membrane</keyword>
<keyword id="KW-0547">Nucleotide-binding</keyword>
<keyword id="KW-1278">Translocase</keyword>
<keyword id="KW-0813">Transport</keyword>
<evidence type="ECO:0000255" key="1">
    <source>
        <dbReference type="HAMAP-Rule" id="MF_01718"/>
    </source>
</evidence>
<reference key="1">
    <citation type="journal article" date="2004" name="Infect. Immun.">
        <title>Growth control of small-colony variants by genetic regulation of the hemin uptake system.</title>
        <authorList>
            <person name="Roggenkamp A."/>
            <person name="Hoffmann H."/>
            <person name="Hornef M.W."/>
        </authorList>
    </citation>
    <scope>NUCLEOTIDE SEQUENCE [GENOMIC DNA]</scope>
    <source>
        <strain>Z-2376</strain>
    </source>
</reference>
<dbReference type="EC" id="7.6.2.-" evidence="1"/>
<dbReference type="EMBL" id="AJ538328">
    <property type="protein sequence ID" value="CAD61866.1"/>
    <property type="molecule type" value="Genomic_DNA"/>
</dbReference>
<dbReference type="SMR" id="Q84EY8"/>
<dbReference type="GO" id="GO:0005886">
    <property type="term" value="C:plasma membrane"/>
    <property type="evidence" value="ECO:0007669"/>
    <property type="project" value="UniProtKB-SubCell"/>
</dbReference>
<dbReference type="GO" id="GO:0005524">
    <property type="term" value="F:ATP binding"/>
    <property type="evidence" value="ECO:0007669"/>
    <property type="project" value="UniProtKB-KW"/>
</dbReference>
<dbReference type="GO" id="GO:0016887">
    <property type="term" value="F:ATP hydrolysis activity"/>
    <property type="evidence" value="ECO:0007669"/>
    <property type="project" value="InterPro"/>
</dbReference>
<dbReference type="CDD" id="cd03214">
    <property type="entry name" value="ABC_Iron-Siderophores_B12_Hemin"/>
    <property type="match status" value="1"/>
</dbReference>
<dbReference type="Gene3D" id="3.40.50.300">
    <property type="entry name" value="P-loop containing nucleotide triphosphate hydrolases"/>
    <property type="match status" value="1"/>
</dbReference>
<dbReference type="InterPro" id="IPR003593">
    <property type="entry name" value="AAA+_ATPase"/>
</dbReference>
<dbReference type="InterPro" id="IPR003439">
    <property type="entry name" value="ABC_transporter-like_ATP-bd"/>
</dbReference>
<dbReference type="InterPro" id="IPR017871">
    <property type="entry name" value="ABC_transporter-like_CS"/>
</dbReference>
<dbReference type="InterPro" id="IPR027417">
    <property type="entry name" value="P-loop_NTPase"/>
</dbReference>
<dbReference type="NCBIfam" id="NF010068">
    <property type="entry name" value="PRK13548.1"/>
    <property type="match status" value="1"/>
</dbReference>
<dbReference type="PANTHER" id="PTHR42794">
    <property type="entry name" value="HEMIN IMPORT ATP-BINDING PROTEIN HMUV"/>
    <property type="match status" value="1"/>
</dbReference>
<dbReference type="PANTHER" id="PTHR42794:SF1">
    <property type="entry name" value="HEMIN IMPORT ATP-BINDING PROTEIN HMUV"/>
    <property type="match status" value="1"/>
</dbReference>
<dbReference type="Pfam" id="PF00005">
    <property type="entry name" value="ABC_tran"/>
    <property type="match status" value="1"/>
</dbReference>
<dbReference type="SMART" id="SM00382">
    <property type="entry name" value="AAA"/>
    <property type="match status" value="1"/>
</dbReference>
<dbReference type="SUPFAM" id="SSF52540">
    <property type="entry name" value="P-loop containing nucleoside triphosphate hydrolases"/>
    <property type="match status" value="1"/>
</dbReference>
<dbReference type="PROSITE" id="PS00211">
    <property type="entry name" value="ABC_TRANSPORTER_1"/>
    <property type="match status" value="1"/>
</dbReference>
<dbReference type="PROSITE" id="PS50893">
    <property type="entry name" value="ABC_TRANSPORTER_2"/>
    <property type="match status" value="1"/>
</dbReference>
<dbReference type="PROSITE" id="PS51261">
    <property type="entry name" value="HMUV"/>
    <property type="match status" value="1"/>
</dbReference>
<protein>
    <recommendedName>
        <fullName evidence="1">Hemin import ATP-binding protein HmuV</fullName>
        <ecNumber evidence="1">7.6.2.-</ecNumber>
    </recommendedName>
</protein>
<gene>
    <name evidence="1" type="primary">hmuV</name>
    <name type="synonym">ehuV</name>
</gene>
<organism>
    <name type="scientific">Enterobacter cloacae</name>
    <dbReference type="NCBI Taxonomy" id="550"/>
    <lineage>
        <taxon>Bacteria</taxon>
        <taxon>Pseudomonadati</taxon>
        <taxon>Pseudomonadota</taxon>
        <taxon>Gammaproteobacteria</taxon>
        <taxon>Enterobacterales</taxon>
        <taxon>Enterobacteriaceae</taxon>
        <taxon>Enterobacter</taxon>
        <taxon>Enterobacter cloacae complex</taxon>
    </lineage>
</organism>
<proteinExistence type="inferred from homology"/>
<sequence length="261" mass="28817">MAERYTAENLTFTRSGRTLTDNVSLSLSQGELVTLIGPNGAGKSTLLRLLTGYLKPDSGGCSLAGKALDEWHPQTLSRYRAVMRQQSQPGFDWQVEEIVGMGRAPWTRHPEPSIVREVLQLTGCLPLAGRRYHALSGGEQQRVQLARALAQLGVTERRAAWLFLDEPTSALDLYHQQHLLRLLKSLTRQGHLHACVVLHDLNLAALWSDRILLLHNGRIVSQGIPETVLQADALAHWYGAQVHVGMTSGARRTAGFSRPLA</sequence>
<comment type="function">
    <text evidence="1">Part of the ABC transporter complex HmuTUV involved in hemin import. Responsible for energy coupling to the transport system.</text>
</comment>
<comment type="subunit">
    <text evidence="1">The complex is composed of two ATP-binding proteins (HmuV), two transmembrane proteins (HmuU) and a solute-binding protein (HmuT).</text>
</comment>
<comment type="subcellular location">
    <subcellularLocation>
        <location evidence="1">Cell inner membrane</location>
        <topology evidence="1">Peripheral membrane protein</topology>
    </subcellularLocation>
</comment>
<comment type="similarity">
    <text evidence="1">Belongs to the ABC transporter superfamily. Heme (hemin) importer (TC 3.A.1.14.5) family.</text>
</comment>